<keyword id="KW-0028">Amino-acid biosynthesis</keyword>
<keyword id="KW-0479">Metal-binding</keyword>
<keyword id="KW-0486">Methionine biosynthesis</keyword>
<keyword id="KW-0520">NAD</keyword>
<keyword id="KW-0521">NADP</keyword>
<keyword id="KW-0560">Oxidoreductase</keyword>
<keyword id="KW-1185">Reference proteome</keyword>
<keyword id="KW-0915">Sodium</keyword>
<keyword id="KW-0791">Threonine biosynthesis</keyword>
<name>DHOM_HELPY</name>
<feature type="chain" id="PRO_0000066694" description="Homoserine dehydrogenase">
    <location>
        <begin position="1"/>
        <end position="421"/>
    </location>
</feature>
<feature type="domain" description="ACT" evidence="5">
    <location>
        <begin position="343"/>
        <end position="418"/>
    </location>
</feature>
<feature type="active site" description="Proton donor" evidence="4">
    <location>
        <position position="201"/>
    </location>
</feature>
<feature type="binding site" evidence="3">
    <location>
        <position position="15"/>
    </location>
    <ligand>
        <name>NAD(+)</name>
        <dbReference type="ChEBI" id="CHEBI:57540"/>
    </ligand>
</feature>
<feature type="binding site" evidence="1">
    <location>
        <position position="15"/>
    </location>
    <ligand>
        <name>NADP(+)</name>
        <dbReference type="ChEBI" id="CHEBI:58349"/>
    </ligand>
</feature>
<feature type="binding site" evidence="2">
    <location>
        <position position="15"/>
    </location>
    <ligand>
        <name>NADPH</name>
        <dbReference type="ChEBI" id="CHEBI:57783"/>
    </ligand>
</feature>
<feature type="binding site" evidence="3">
    <location>
        <position position="34"/>
    </location>
    <ligand>
        <name>NAD(+)</name>
        <dbReference type="ChEBI" id="CHEBI:57540"/>
    </ligand>
</feature>
<feature type="binding site" evidence="3">
    <location>
        <position position="44"/>
    </location>
    <ligand>
        <name>NAD(+)</name>
        <dbReference type="ChEBI" id="CHEBI:57540"/>
    </ligand>
</feature>
<feature type="binding site" evidence="1">
    <location>
        <position position="46"/>
    </location>
    <ligand>
        <name>NADP(+)</name>
        <dbReference type="ChEBI" id="CHEBI:58349"/>
    </ligand>
</feature>
<feature type="binding site" evidence="2">
    <location>
        <position position="46"/>
    </location>
    <ligand>
        <name>NADPH</name>
        <dbReference type="ChEBI" id="CHEBI:57783"/>
    </ligand>
</feature>
<feature type="binding site" evidence="1">
    <location>
        <position position="103"/>
    </location>
    <ligand>
        <name>NADP(+)</name>
        <dbReference type="ChEBI" id="CHEBI:58349"/>
    </ligand>
</feature>
<feature type="binding site" evidence="2">
    <location>
        <position position="103"/>
    </location>
    <ligand>
        <name>NADPH</name>
        <dbReference type="ChEBI" id="CHEBI:57783"/>
    </ligand>
</feature>
<feature type="binding site" evidence="3">
    <location>
        <position position="125"/>
    </location>
    <ligand>
        <name>Na(+)</name>
        <dbReference type="ChEBI" id="CHEBI:29101"/>
    </ligand>
</feature>
<feature type="binding site" evidence="3">
    <location>
        <position position="128"/>
    </location>
    <ligand>
        <name>Na(+)</name>
        <dbReference type="ChEBI" id="CHEBI:29101"/>
    </ligand>
</feature>
<feature type="binding site" evidence="3">
    <location>
        <position position="130"/>
    </location>
    <ligand>
        <name>Na(+)</name>
        <dbReference type="ChEBI" id="CHEBI:29101"/>
    </ligand>
</feature>
<feature type="binding site" evidence="3">
    <location>
        <position position="132"/>
    </location>
    <ligand>
        <name>Na(+)</name>
        <dbReference type="ChEBI" id="CHEBI:29101"/>
    </ligand>
</feature>
<feature type="binding site" evidence="1">
    <location>
        <position position="183"/>
    </location>
    <ligand>
        <name>NADP(+)</name>
        <dbReference type="ChEBI" id="CHEBI:58349"/>
    </ligand>
</feature>
<feature type="binding site" evidence="3">
    <location>
        <position position="186"/>
    </location>
    <ligand>
        <name>L-homoserine</name>
        <dbReference type="ChEBI" id="CHEBI:57476"/>
    </ligand>
</feature>
<feature type="binding site" evidence="1">
    <location>
        <position position="186"/>
    </location>
    <ligand>
        <name>NADP(+)</name>
        <dbReference type="ChEBI" id="CHEBI:58349"/>
    </ligand>
</feature>
<feature type="binding site" evidence="3">
    <location>
        <position position="197"/>
    </location>
    <ligand>
        <name>L-homoserine</name>
        <dbReference type="ChEBI" id="CHEBI:57476"/>
    </ligand>
</feature>
<feature type="binding site" evidence="3">
    <location>
        <position position="298"/>
    </location>
    <ligand>
        <name>NAD(+)</name>
        <dbReference type="ChEBI" id="CHEBI:57540"/>
    </ligand>
</feature>
<feature type="binding site" evidence="1">
    <location>
        <position position="298"/>
    </location>
    <ligand>
        <name>NADP(+)</name>
        <dbReference type="ChEBI" id="CHEBI:58349"/>
    </ligand>
</feature>
<feature type="binding site" evidence="2">
    <location>
        <position position="298"/>
    </location>
    <ligand>
        <name>NADPH</name>
        <dbReference type="ChEBI" id="CHEBI:57783"/>
    </ligand>
</feature>
<sequence length="421" mass="46168">MKKRLNIGLVGLGCVGSAVAKILQENQEIIKDRAGVGIGIKKAVVRDVKKHKGYPFEISNDLESLIEDEEIDIVVELMGGVEAPYLLAKKTLAKQKAFVTANKAMLAYHRYELEQTAKNTPIGFEASVCGGIPIIKALKDGLSANHILSFKGILNGTSNYILSQMFKNQASFKDALKDAQHLGYAELNPEFDIKGIDAAHKLLILASLAYGIDAKLEEILIEGIEKIEPDDMEFAKEFGYSIKLLGIAKKHPDCIELRVHPSMIKNECMLSKVDGVMNAISVIGDKVGETLYYGAGAGGEPTASAVISDIIEIARKKSSLMLGFETPQKLPLKPKEEIQCAYYARLLVSDEKGVFSQISAILAQNDISLNNVLQKEILHSNKAKILFSTHTTNEKSMLNALKELENLQSVLDTPKMIRLEN</sequence>
<accession>P56429</accession>
<reference key="1">
    <citation type="journal article" date="1997" name="Nature">
        <title>The complete genome sequence of the gastric pathogen Helicobacter pylori.</title>
        <authorList>
            <person name="Tomb J.-F."/>
            <person name="White O."/>
            <person name="Kerlavage A.R."/>
            <person name="Clayton R.A."/>
            <person name="Sutton G.G."/>
            <person name="Fleischmann R.D."/>
            <person name="Ketchum K.A."/>
            <person name="Klenk H.-P."/>
            <person name="Gill S.R."/>
            <person name="Dougherty B.A."/>
            <person name="Nelson K.E."/>
            <person name="Quackenbush J."/>
            <person name="Zhou L."/>
            <person name="Kirkness E.F."/>
            <person name="Peterson S.N."/>
            <person name="Loftus B.J."/>
            <person name="Richardson D.L."/>
            <person name="Dodson R.J."/>
            <person name="Khalak H.G."/>
            <person name="Glodek A."/>
            <person name="McKenney K."/>
            <person name="FitzGerald L.M."/>
            <person name="Lee N."/>
            <person name="Adams M.D."/>
            <person name="Hickey E.K."/>
            <person name="Berg D.E."/>
            <person name="Gocayne J.D."/>
            <person name="Utterback T.R."/>
            <person name="Peterson J.D."/>
            <person name="Kelley J.M."/>
            <person name="Cotton M.D."/>
            <person name="Weidman J.F."/>
            <person name="Fujii C."/>
            <person name="Bowman C."/>
            <person name="Watthey L."/>
            <person name="Wallin E."/>
            <person name="Hayes W.S."/>
            <person name="Borodovsky M."/>
            <person name="Karp P.D."/>
            <person name="Smith H.O."/>
            <person name="Fraser C.M."/>
            <person name="Venter J.C."/>
        </authorList>
    </citation>
    <scope>NUCLEOTIDE SEQUENCE [LARGE SCALE GENOMIC DNA]</scope>
    <source>
        <strain>ATCC 700392 / 26695</strain>
    </source>
</reference>
<proteinExistence type="inferred from homology"/>
<organism>
    <name type="scientific">Helicobacter pylori (strain ATCC 700392 / 26695)</name>
    <name type="common">Campylobacter pylori</name>
    <dbReference type="NCBI Taxonomy" id="85962"/>
    <lineage>
        <taxon>Bacteria</taxon>
        <taxon>Pseudomonadati</taxon>
        <taxon>Campylobacterota</taxon>
        <taxon>Epsilonproteobacteria</taxon>
        <taxon>Campylobacterales</taxon>
        <taxon>Helicobacteraceae</taxon>
        <taxon>Helicobacter</taxon>
    </lineage>
</organism>
<evidence type="ECO:0000250" key="1">
    <source>
        <dbReference type="UniProtKB" id="F9VNG5"/>
    </source>
</evidence>
<evidence type="ECO:0000250" key="2">
    <source>
        <dbReference type="UniProtKB" id="O58802"/>
    </source>
</evidence>
<evidence type="ECO:0000250" key="3">
    <source>
        <dbReference type="UniProtKB" id="P31116"/>
    </source>
</evidence>
<evidence type="ECO:0000255" key="4"/>
<evidence type="ECO:0000255" key="5">
    <source>
        <dbReference type="PROSITE-ProRule" id="PRU01007"/>
    </source>
</evidence>
<evidence type="ECO:0000305" key="6"/>
<gene>
    <name type="primary">hom</name>
    <name type="ordered locus">HP_0822</name>
</gene>
<protein>
    <recommendedName>
        <fullName>Homoserine dehydrogenase</fullName>
        <shortName>HDH</shortName>
        <shortName>HSD</shortName>
        <ecNumber evidence="3">1.1.1.3</ecNumber>
    </recommendedName>
</protein>
<comment type="function">
    <text evidence="3">Catalyzes the conversion of L-aspartate-beta-semialdehyde (L-Asa) to L-homoserine (L-Hse), the third step in the biosynthesis of threonine and methionine from aspartate.</text>
</comment>
<comment type="catalytic activity">
    <reaction evidence="3">
        <text>L-homoserine + NADP(+) = L-aspartate 4-semialdehyde + NADPH + H(+)</text>
        <dbReference type="Rhea" id="RHEA:15761"/>
        <dbReference type="ChEBI" id="CHEBI:15378"/>
        <dbReference type="ChEBI" id="CHEBI:57476"/>
        <dbReference type="ChEBI" id="CHEBI:57783"/>
        <dbReference type="ChEBI" id="CHEBI:58349"/>
        <dbReference type="ChEBI" id="CHEBI:537519"/>
        <dbReference type="EC" id="1.1.1.3"/>
    </reaction>
    <physiologicalReaction direction="right-to-left" evidence="3">
        <dbReference type="Rhea" id="RHEA:15763"/>
    </physiologicalReaction>
</comment>
<comment type="catalytic activity">
    <reaction evidence="3">
        <text>L-homoserine + NAD(+) = L-aspartate 4-semialdehyde + NADH + H(+)</text>
        <dbReference type="Rhea" id="RHEA:15757"/>
        <dbReference type="ChEBI" id="CHEBI:15378"/>
        <dbReference type="ChEBI" id="CHEBI:57476"/>
        <dbReference type="ChEBI" id="CHEBI:57540"/>
        <dbReference type="ChEBI" id="CHEBI:57945"/>
        <dbReference type="ChEBI" id="CHEBI:537519"/>
        <dbReference type="EC" id="1.1.1.3"/>
    </reaction>
    <physiologicalReaction direction="right-to-left" evidence="3">
        <dbReference type="Rhea" id="RHEA:15759"/>
    </physiologicalReaction>
</comment>
<comment type="cofactor">
    <cofactor evidence="3">
        <name>a metal cation</name>
        <dbReference type="ChEBI" id="CHEBI:25213"/>
    </cofactor>
    <text evidence="3">A sodium ion is seen in the structure; a metal ion may subtly affect the relative position of the nucleotide-binding region to influence enzyme activity, and could increase the stability of the enzyme.</text>
</comment>
<comment type="pathway">
    <text evidence="3">Amino-acid biosynthesis; L-methionine biosynthesis via de novo pathway; L-homoserine from L-aspartate: step 3/3.</text>
</comment>
<comment type="pathway">
    <text evidence="3">Amino-acid biosynthesis; L-threonine biosynthesis; L-threonine from L-aspartate: step 3/5.</text>
</comment>
<comment type="similarity">
    <text evidence="6">Belongs to the homoserine dehydrogenase family.</text>
</comment>
<dbReference type="EC" id="1.1.1.3" evidence="3"/>
<dbReference type="EMBL" id="AE000511">
    <property type="protein sequence ID" value="AAD07869.1"/>
    <property type="molecule type" value="Genomic_DNA"/>
</dbReference>
<dbReference type="PIR" id="F64622">
    <property type="entry name" value="F64622"/>
</dbReference>
<dbReference type="RefSeq" id="NP_207615.1">
    <property type="nucleotide sequence ID" value="NC_000915.1"/>
</dbReference>
<dbReference type="RefSeq" id="WP_000746824.1">
    <property type="nucleotide sequence ID" value="NC_018939.1"/>
</dbReference>
<dbReference type="SMR" id="P56429"/>
<dbReference type="DIP" id="DIP-3530N"/>
<dbReference type="IntAct" id="P56429">
    <property type="interactions" value="3"/>
</dbReference>
<dbReference type="MINT" id="P56429"/>
<dbReference type="STRING" id="85962.HP_0822"/>
<dbReference type="PaxDb" id="85962-C694_04210"/>
<dbReference type="EnsemblBacteria" id="AAD07869">
    <property type="protein sequence ID" value="AAD07869"/>
    <property type="gene ID" value="HP_0822"/>
</dbReference>
<dbReference type="KEGG" id="heo:C694_04210"/>
<dbReference type="KEGG" id="hpy:HP_0822"/>
<dbReference type="PATRIC" id="fig|85962.47.peg.876"/>
<dbReference type="eggNOG" id="COG0460">
    <property type="taxonomic scope" value="Bacteria"/>
</dbReference>
<dbReference type="InParanoid" id="P56429"/>
<dbReference type="OrthoDB" id="9808167at2"/>
<dbReference type="PhylomeDB" id="P56429"/>
<dbReference type="UniPathway" id="UPA00050">
    <property type="reaction ID" value="UER00063"/>
</dbReference>
<dbReference type="UniPathway" id="UPA00051">
    <property type="reaction ID" value="UER00465"/>
</dbReference>
<dbReference type="Proteomes" id="UP000000429">
    <property type="component" value="Chromosome"/>
</dbReference>
<dbReference type="GO" id="GO:0004412">
    <property type="term" value="F:homoserine dehydrogenase activity"/>
    <property type="evidence" value="ECO:0000250"/>
    <property type="project" value="UniProtKB"/>
</dbReference>
<dbReference type="GO" id="GO:0046872">
    <property type="term" value="F:metal ion binding"/>
    <property type="evidence" value="ECO:0007669"/>
    <property type="project" value="UniProtKB-KW"/>
</dbReference>
<dbReference type="GO" id="GO:0070403">
    <property type="term" value="F:NAD+ binding"/>
    <property type="evidence" value="ECO:0000250"/>
    <property type="project" value="UniProtKB"/>
</dbReference>
<dbReference type="GO" id="GO:0050661">
    <property type="term" value="F:NADP binding"/>
    <property type="evidence" value="ECO:0007669"/>
    <property type="project" value="InterPro"/>
</dbReference>
<dbReference type="GO" id="GO:0009086">
    <property type="term" value="P:methionine biosynthetic process"/>
    <property type="evidence" value="ECO:0000250"/>
    <property type="project" value="UniProtKB"/>
</dbReference>
<dbReference type="GO" id="GO:0009088">
    <property type="term" value="P:threonine biosynthetic process"/>
    <property type="evidence" value="ECO:0000250"/>
    <property type="project" value="UniProtKB"/>
</dbReference>
<dbReference type="CDD" id="cd04881">
    <property type="entry name" value="ACT_HSDH-Hom"/>
    <property type="match status" value="1"/>
</dbReference>
<dbReference type="FunFam" id="3.30.360.10:FF:000005">
    <property type="entry name" value="Homoserine dehydrogenase"/>
    <property type="match status" value="1"/>
</dbReference>
<dbReference type="Gene3D" id="3.30.70.260">
    <property type="match status" value="1"/>
</dbReference>
<dbReference type="Gene3D" id="3.30.360.10">
    <property type="entry name" value="Dihydrodipicolinate Reductase, domain 2"/>
    <property type="match status" value="1"/>
</dbReference>
<dbReference type="Gene3D" id="3.40.50.720">
    <property type="entry name" value="NAD(P)-binding Rossmann-like Domain"/>
    <property type="match status" value="1"/>
</dbReference>
<dbReference type="InterPro" id="IPR045865">
    <property type="entry name" value="ACT-like_dom_sf"/>
</dbReference>
<dbReference type="InterPro" id="IPR002912">
    <property type="entry name" value="ACT_dom"/>
</dbReference>
<dbReference type="InterPro" id="IPR005106">
    <property type="entry name" value="Asp/hSer_DH_NAD-bd"/>
</dbReference>
<dbReference type="InterPro" id="IPR016204">
    <property type="entry name" value="HDH"/>
</dbReference>
<dbReference type="InterPro" id="IPR001342">
    <property type="entry name" value="HDH_cat"/>
</dbReference>
<dbReference type="InterPro" id="IPR019811">
    <property type="entry name" value="HDH_CS"/>
</dbReference>
<dbReference type="InterPro" id="IPR036291">
    <property type="entry name" value="NAD(P)-bd_dom_sf"/>
</dbReference>
<dbReference type="NCBIfam" id="NF004976">
    <property type="entry name" value="PRK06349.1"/>
    <property type="match status" value="1"/>
</dbReference>
<dbReference type="PANTHER" id="PTHR43331">
    <property type="entry name" value="HOMOSERINE DEHYDROGENASE"/>
    <property type="match status" value="1"/>
</dbReference>
<dbReference type="PANTHER" id="PTHR43331:SF1">
    <property type="entry name" value="HOMOSERINE DEHYDROGENASE"/>
    <property type="match status" value="1"/>
</dbReference>
<dbReference type="Pfam" id="PF01842">
    <property type="entry name" value="ACT"/>
    <property type="match status" value="1"/>
</dbReference>
<dbReference type="Pfam" id="PF00742">
    <property type="entry name" value="Homoserine_dh"/>
    <property type="match status" value="1"/>
</dbReference>
<dbReference type="Pfam" id="PF03447">
    <property type="entry name" value="NAD_binding_3"/>
    <property type="match status" value="1"/>
</dbReference>
<dbReference type="PIRSF" id="PIRSF000098">
    <property type="entry name" value="Homoser_dehydrog"/>
    <property type="match status" value="1"/>
</dbReference>
<dbReference type="SUPFAM" id="SSF55021">
    <property type="entry name" value="ACT-like"/>
    <property type="match status" value="1"/>
</dbReference>
<dbReference type="SUPFAM" id="SSF55347">
    <property type="entry name" value="Glyceraldehyde-3-phosphate dehydrogenase-like, C-terminal domain"/>
    <property type="match status" value="1"/>
</dbReference>
<dbReference type="SUPFAM" id="SSF51735">
    <property type="entry name" value="NAD(P)-binding Rossmann-fold domains"/>
    <property type="match status" value="1"/>
</dbReference>
<dbReference type="PROSITE" id="PS51671">
    <property type="entry name" value="ACT"/>
    <property type="match status" value="1"/>
</dbReference>
<dbReference type="PROSITE" id="PS01042">
    <property type="entry name" value="HOMOSER_DHGENASE"/>
    <property type="match status" value="1"/>
</dbReference>